<proteinExistence type="inferred from homology"/>
<keyword id="KW-0227">DNA damage</keyword>
<keyword id="KW-0234">DNA repair</keyword>
<keyword id="KW-0238">DNA-binding</keyword>
<keyword id="KW-0326">Glycosidase</keyword>
<keyword id="KW-0378">Hydrolase</keyword>
<keyword id="KW-0456">Lyase</keyword>
<keyword id="KW-0479">Metal-binding</keyword>
<keyword id="KW-0511">Multifunctional enzyme</keyword>
<keyword id="KW-1185">Reference proteome</keyword>
<keyword id="KW-0862">Zinc</keyword>
<keyword id="KW-0863">Zinc-finger</keyword>
<protein>
    <recommendedName>
        <fullName evidence="2">Formamidopyrimidine-DNA glycosylase</fullName>
        <shortName evidence="2">Fapy-DNA glycosylase</shortName>
        <ecNumber evidence="2">3.2.2.23</ecNumber>
    </recommendedName>
    <alternativeName>
        <fullName evidence="2">DNA-(apurinic or apyrimidinic site) lyase MutM</fullName>
        <shortName evidence="2">AP lyase MutM</shortName>
        <ecNumber evidence="2">4.2.99.18</ecNumber>
    </alternativeName>
</protein>
<dbReference type="EC" id="3.2.2.23" evidence="2"/>
<dbReference type="EC" id="4.2.99.18" evidence="2"/>
<dbReference type="EMBL" id="CP000633">
    <property type="protein sequence ID" value="ACM35267.1"/>
    <property type="molecule type" value="Genomic_DNA"/>
</dbReference>
<dbReference type="RefSeq" id="WP_012654797.1">
    <property type="nucleotide sequence ID" value="NC_011989.1"/>
</dbReference>
<dbReference type="SMR" id="B9JZF5"/>
<dbReference type="STRING" id="311402.Avi_0389"/>
<dbReference type="KEGG" id="avi:Avi_0389"/>
<dbReference type="eggNOG" id="COG0266">
    <property type="taxonomic scope" value="Bacteria"/>
</dbReference>
<dbReference type="HOGENOM" id="CLU_038423_1_1_5"/>
<dbReference type="Proteomes" id="UP000001596">
    <property type="component" value="Chromosome 1"/>
</dbReference>
<dbReference type="GO" id="GO:0034039">
    <property type="term" value="F:8-oxo-7,8-dihydroguanine DNA N-glycosylase activity"/>
    <property type="evidence" value="ECO:0007669"/>
    <property type="project" value="TreeGrafter"/>
</dbReference>
<dbReference type="GO" id="GO:0140078">
    <property type="term" value="F:class I DNA-(apurinic or apyrimidinic site) endonuclease activity"/>
    <property type="evidence" value="ECO:0007669"/>
    <property type="project" value="UniProtKB-EC"/>
</dbReference>
<dbReference type="GO" id="GO:0003684">
    <property type="term" value="F:damaged DNA binding"/>
    <property type="evidence" value="ECO:0007669"/>
    <property type="project" value="InterPro"/>
</dbReference>
<dbReference type="GO" id="GO:0008270">
    <property type="term" value="F:zinc ion binding"/>
    <property type="evidence" value="ECO:0007669"/>
    <property type="project" value="UniProtKB-UniRule"/>
</dbReference>
<dbReference type="GO" id="GO:0006284">
    <property type="term" value="P:base-excision repair"/>
    <property type="evidence" value="ECO:0007669"/>
    <property type="project" value="InterPro"/>
</dbReference>
<dbReference type="CDD" id="cd08966">
    <property type="entry name" value="EcFpg-like_N"/>
    <property type="match status" value="1"/>
</dbReference>
<dbReference type="FunFam" id="1.10.8.50:FF:000003">
    <property type="entry name" value="Formamidopyrimidine-DNA glycosylase"/>
    <property type="match status" value="1"/>
</dbReference>
<dbReference type="Gene3D" id="1.10.8.50">
    <property type="match status" value="1"/>
</dbReference>
<dbReference type="Gene3D" id="3.20.190.10">
    <property type="entry name" value="MutM-like, N-terminal"/>
    <property type="match status" value="1"/>
</dbReference>
<dbReference type="HAMAP" id="MF_00103">
    <property type="entry name" value="Fapy_DNA_glycosyl"/>
    <property type="match status" value="1"/>
</dbReference>
<dbReference type="InterPro" id="IPR015886">
    <property type="entry name" value="DNA_glyclase/AP_lyase_DNA-bd"/>
</dbReference>
<dbReference type="InterPro" id="IPR020629">
    <property type="entry name" value="Formamido-pyr_DNA_Glyclase"/>
</dbReference>
<dbReference type="InterPro" id="IPR012319">
    <property type="entry name" value="FPG_cat"/>
</dbReference>
<dbReference type="InterPro" id="IPR035937">
    <property type="entry name" value="MutM-like_N-ter"/>
</dbReference>
<dbReference type="InterPro" id="IPR010979">
    <property type="entry name" value="Ribosomal_uS13-like_H2TH"/>
</dbReference>
<dbReference type="InterPro" id="IPR000214">
    <property type="entry name" value="Znf_DNA_glyclase/AP_lyase"/>
</dbReference>
<dbReference type="NCBIfam" id="TIGR00577">
    <property type="entry name" value="fpg"/>
    <property type="match status" value="1"/>
</dbReference>
<dbReference type="NCBIfam" id="NF002211">
    <property type="entry name" value="PRK01103.1"/>
    <property type="match status" value="1"/>
</dbReference>
<dbReference type="PANTHER" id="PTHR22993">
    <property type="entry name" value="FORMAMIDOPYRIMIDINE-DNA GLYCOSYLASE"/>
    <property type="match status" value="1"/>
</dbReference>
<dbReference type="PANTHER" id="PTHR22993:SF9">
    <property type="entry name" value="FORMAMIDOPYRIMIDINE-DNA GLYCOSYLASE"/>
    <property type="match status" value="1"/>
</dbReference>
<dbReference type="Pfam" id="PF01149">
    <property type="entry name" value="Fapy_DNA_glyco"/>
    <property type="match status" value="1"/>
</dbReference>
<dbReference type="Pfam" id="PF06831">
    <property type="entry name" value="H2TH"/>
    <property type="match status" value="1"/>
</dbReference>
<dbReference type="SMART" id="SM00898">
    <property type="entry name" value="Fapy_DNA_glyco"/>
    <property type="match status" value="1"/>
</dbReference>
<dbReference type="SMART" id="SM01232">
    <property type="entry name" value="H2TH"/>
    <property type="match status" value="1"/>
</dbReference>
<dbReference type="SUPFAM" id="SSF57716">
    <property type="entry name" value="Glucocorticoid receptor-like (DNA-binding domain)"/>
    <property type="match status" value="1"/>
</dbReference>
<dbReference type="SUPFAM" id="SSF81624">
    <property type="entry name" value="N-terminal domain of MutM-like DNA repair proteins"/>
    <property type="match status" value="1"/>
</dbReference>
<dbReference type="SUPFAM" id="SSF46946">
    <property type="entry name" value="S13-like H2TH domain"/>
    <property type="match status" value="1"/>
</dbReference>
<dbReference type="PROSITE" id="PS51068">
    <property type="entry name" value="FPG_CAT"/>
    <property type="match status" value="1"/>
</dbReference>
<dbReference type="PROSITE" id="PS51066">
    <property type="entry name" value="ZF_FPG_2"/>
    <property type="match status" value="1"/>
</dbReference>
<gene>
    <name evidence="2" type="primary">mutM</name>
    <name evidence="2" type="synonym">fpg</name>
    <name type="ordered locus">Avi_0389</name>
</gene>
<accession>B9JZF5</accession>
<name>FPG_ALLAM</name>
<sequence>MPELPEVETVKRGLAPSMEGRRLTRLELRRTDLRFPLPVDFAARTQGRLIVSLSRRAKYLLIDLDDGVSIVSHLGMSGSYRIEAANETGLPGQFHMARSRDEKHDHVIFHLSGPEGDPLRVIYNDPRRFGFMDMVERRHMDRHAAFAGLGPEPVGNALDADYLAFRFKGKAQPLKTALLDQKVIAGLGNIYVCEALWRAHLSPETPARALVNAEGKPVAALEDLTQAIRTVIAEAIEAGGSSLRDHIQADGSLGYFQHSFNVYDREGEACRTPGCTGTVERMTQAGRSTFHCPQCQR</sequence>
<feature type="initiator methionine" description="Removed" evidence="1">
    <location>
        <position position="1"/>
    </location>
</feature>
<feature type="chain" id="PRO_1000190053" description="Formamidopyrimidine-DNA glycosylase">
    <location>
        <begin position="2"/>
        <end position="297"/>
    </location>
</feature>
<feature type="zinc finger region" description="FPG-type" evidence="2">
    <location>
        <begin position="261"/>
        <end position="297"/>
    </location>
</feature>
<feature type="active site" description="Schiff-base intermediate with DNA" evidence="2">
    <location>
        <position position="2"/>
    </location>
</feature>
<feature type="active site" description="Proton donor" evidence="2">
    <location>
        <position position="3"/>
    </location>
</feature>
<feature type="active site" description="Proton donor; for beta-elimination activity" evidence="2">
    <location>
        <position position="58"/>
    </location>
</feature>
<feature type="active site" description="Proton donor; for delta-elimination activity" evidence="2">
    <location>
        <position position="287"/>
    </location>
</feature>
<feature type="binding site" evidence="2">
    <location>
        <position position="104"/>
    </location>
    <ligand>
        <name>DNA</name>
        <dbReference type="ChEBI" id="CHEBI:16991"/>
    </ligand>
</feature>
<feature type="binding site" evidence="2">
    <location>
        <position position="127"/>
    </location>
    <ligand>
        <name>DNA</name>
        <dbReference type="ChEBI" id="CHEBI:16991"/>
    </ligand>
</feature>
<feature type="binding site" evidence="2">
    <location>
        <position position="170"/>
    </location>
    <ligand>
        <name>DNA</name>
        <dbReference type="ChEBI" id="CHEBI:16991"/>
    </ligand>
</feature>
<organism>
    <name type="scientific">Allorhizobium ampelinum (strain ATCC BAA-846 / DSM 112012 / S4)</name>
    <name type="common">Agrobacterium vitis (strain S4)</name>
    <dbReference type="NCBI Taxonomy" id="311402"/>
    <lineage>
        <taxon>Bacteria</taxon>
        <taxon>Pseudomonadati</taxon>
        <taxon>Pseudomonadota</taxon>
        <taxon>Alphaproteobacteria</taxon>
        <taxon>Hyphomicrobiales</taxon>
        <taxon>Rhizobiaceae</taxon>
        <taxon>Rhizobium/Agrobacterium group</taxon>
        <taxon>Allorhizobium</taxon>
        <taxon>Allorhizobium ampelinum</taxon>
    </lineage>
</organism>
<reference key="1">
    <citation type="journal article" date="2009" name="J. Bacteriol.">
        <title>Genome sequences of three Agrobacterium biovars help elucidate the evolution of multichromosome genomes in bacteria.</title>
        <authorList>
            <person name="Slater S.C."/>
            <person name="Goldman B.S."/>
            <person name="Goodner B."/>
            <person name="Setubal J.C."/>
            <person name="Farrand S.K."/>
            <person name="Nester E.W."/>
            <person name="Burr T.J."/>
            <person name="Banta L."/>
            <person name="Dickerman A.W."/>
            <person name="Paulsen I."/>
            <person name="Otten L."/>
            <person name="Suen G."/>
            <person name="Welch R."/>
            <person name="Almeida N.F."/>
            <person name="Arnold F."/>
            <person name="Burton O.T."/>
            <person name="Du Z."/>
            <person name="Ewing A."/>
            <person name="Godsy E."/>
            <person name="Heisel S."/>
            <person name="Houmiel K.L."/>
            <person name="Jhaveri J."/>
            <person name="Lu J."/>
            <person name="Miller N.M."/>
            <person name="Norton S."/>
            <person name="Chen Q."/>
            <person name="Phoolcharoen W."/>
            <person name="Ohlin V."/>
            <person name="Ondrusek D."/>
            <person name="Pride N."/>
            <person name="Stricklin S.L."/>
            <person name="Sun J."/>
            <person name="Wheeler C."/>
            <person name="Wilson L."/>
            <person name="Zhu H."/>
            <person name="Wood D.W."/>
        </authorList>
    </citation>
    <scope>NUCLEOTIDE SEQUENCE [LARGE SCALE GENOMIC DNA]</scope>
    <source>
        <strain>ATCC BAA-846 / DSM 112012 / S4</strain>
    </source>
</reference>
<comment type="function">
    <text evidence="2">Involved in base excision repair of DNA damaged by oxidation or by mutagenic agents. Acts as a DNA glycosylase that recognizes and removes damaged bases. Has a preference for oxidized purines, such as 7,8-dihydro-8-oxoguanine (8-oxoG). Has AP (apurinic/apyrimidinic) lyase activity and introduces nicks in the DNA strand. Cleaves the DNA backbone by beta-delta elimination to generate a single-strand break at the site of the removed base with both 3'- and 5'-phosphates.</text>
</comment>
<comment type="catalytic activity">
    <reaction evidence="2">
        <text>Hydrolysis of DNA containing ring-opened 7-methylguanine residues, releasing 2,6-diamino-4-hydroxy-5-(N-methyl)formamidopyrimidine.</text>
        <dbReference type="EC" id="3.2.2.23"/>
    </reaction>
</comment>
<comment type="catalytic activity">
    <reaction evidence="2">
        <text>2'-deoxyribonucleotide-(2'-deoxyribose 5'-phosphate)-2'-deoxyribonucleotide-DNA = a 3'-end 2'-deoxyribonucleotide-(2,3-dehydro-2,3-deoxyribose 5'-phosphate)-DNA + a 5'-end 5'-phospho-2'-deoxyribonucleoside-DNA + H(+)</text>
        <dbReference type="Rhea" id="RHEA:66592"/>
        <dbReference type="Rhea" id="RHEA-COMP:13180"/>
        <dbReference type="Rhea" id="RHEA-COMP:16897"/>
        <dbReference type="Rhea" id="RHEA-COMP:17067"/>
        <dbReference type="ChEBI" id="CHEBI:15378"/>
        <dbReference type="ChEBI" id="CHEBI:136412"/>
        <dbReference type="ChEBI" id="CHEBI:157695"/>
        <dbReference type="ChEBI" id="CHEBI:167181"/>
        <dbReference type="EC" id="4.2.99.18"/>
    </reaction>
</comment>
<comment type="cofactor">
    <cofactor evidence="2">
        <name>Zn(2+)</name>
        <dbReference type="ChEBI" id="CHEBI:29105"/>
    </cofactor>
    <text evidence="2">Binds 1 zinc ion per subunit.</text>
</comment>
<comment type="subunit">
    <text evidence="2">Monomer.</text>
</comment>
<comment type="similarity">
    <text evidence="2">Belongs to the FPG family.</text>
</comment>
<evidence type="ECO:0000250" key="1"/>
<evidence type="ECO:0000255" key="2">
    <source>
        <dbReference type="HAMAP-Rule" id="MF_00103"/>
    </source>
</evidence>